<keyword id="KW-0067">ATP-binding</keyword>
<keyword id="KW-0131">Cell cycle</keyword>
<keyword id="KW-0132">Cell division</keyword>
<keyword id="KW-0158">Chromosome</keyword>
<keyword id="KW-0175">Coiled coil</keyword>
<keyword id="KW-0227">DNA damage</keyword>
<keyword id="KW-0233">DNA recombination</keyword>
<keyword id="KW-0234">DNA repair</keyword>
<keyword id="KW-0498">Mitosis</keyword>
<keyword id="KW-0547">Nucleotide-binding</keyword>
<keyword id="KW-0539">Nucleus</keyword>
<keyword id="KW-1185">Reference proteome</keyword>
<keyword id="KW-0779">Telomere</keyword>
<reference key="1">
    <citation type="journal article" date="2004" name="Mol. Biol. Evol.">
        <title>The evolution of SMC proteins: phylogenetic analysis and structural implications.</title>
        <authorList>
            <person name="Cobbe N."/>
            <person name="Heck M.M.S."/>
        </authorList>
    </citation>
    <scope>NUCLEOTIDE SEQUENCE [MRNA]</scope>
</reference>
<proteinExistence type="evidence at transcript level"/>
<sequence length="1092" mass="127653">MAEPEKKRRISRVNSSQTSSNIGKILSGHRPCGAEVEGRMDGSILRITMRNFLTYDYTEVYPGPNLNMIVGANGTGKSSIVCAICLGLAGKTAVLGRGDKVGLYVKRGCQKGSIEIELYKHGGNLVITREIHVENNQSHWMINGKQRNQKAVEEEVKNLCIQVSNLCQFLPQEKVGEFAKMSKTELLEATEKSVGPPEMFEFHCELKNFRSKERELENTVTEKTKYIEKAKQRNERNKHDVNRYYEKKRHLDMIELLEKKKPWVEYESTRKELESVKREREEAKRNLSALRHSQAPMIRKIKEIEDRLQPFDDQIKSQTAAIKDAALKCKQKQDQLDRKQKEIEDINQAFKLKEMEEDDHQKRISNTRRIIEDLRTELAKVEDQPDVTPRINDVNSELRRNQIERARIDGEKCELCREKDNAFAQCRSLQKKLNDMNNLMKVKEEKLRGRHRDTHAALQWLRQNRNRFRGNVYEPMLLEINVKDHRFAKYVENHISFQDLRAFVFQRKEDMEIFMSEVRDKMNLKVNSISAPEQSRSKAQPSQNIEDLRRFGFFTYLREMFDAPDEVMSYLCQQYNVHNVPVGTEQTKTMIRQVIEELNLRVLFTLDERYMLKRSVYSKMISTINSPVNPSQYLSIAVDAEEKRQLEQELNACELRFREIDERLKALQRETAVLDRRDNELLAEKKKLSELKGKKRQLEQKISTKQDSLRQMEQNVTDLKKIEEETKEKVSAVNSQKVTIVKAFIASIKLKATLTMEKVYLSLEMMGLSAEKTKLEHDFREGASLLRSMDQRCSQLEQRKVQLTEQGKGQMKRAKSICNMQPNDSLSEELRNVRVYVIPPYLCVPSPLMAFAKLPDTPDDIDSMLNEERSRSECFTGLSENVVDEYNRSDQEIKELENELEEKKNALESYRQNISEAKERWLNPLKQLVEQINEKFTAFFRSMNCAGEVDLHSEKEEDYDKYGIRIRVKFHSNTQLHELTPFHQSGGERSVSTMLYLMSLQELNRCPFRVVDEINQGMDPINERRVFDIVVGTACKERTSQYFFITPKLLQNLKYAEEMTVLCVHNGAYMLPPNQWDDKAFLRRCLQRKAKA</sequence>
<organism>
    <name type="scientific">Takifugu rubripes</name>
    <name type="common">Japanese pufferfish</name>
    <name type="synonym">Fugu rubripes</name>
    <dbReference type="NCBI Taxonomy" id="31033"/>
    <lineage>
        <taxon>Eukaryota</taxon>
        <taxon>Metazoa</taxon>
        <taxon>Chordata</taxon>
        <taxon>Craniata</taxon>
        <taxon>Vertebrata</taxon>
        <taxon>Euteleostomi</taxon>
        <taxon>Actinopterygii</taxon>
        <taxon>Neopterygii</taxon>
        <taxon>Teleostei</taxon>
        <taxon>Neoteleostei</taxon>
        <taxon>Acanthomorphata</taxon>
        <taxon>Eupercaria</taxon>
        <taxon>Tetraodontiformes</taxon>
        <taxon>Tetradontoidea</taxon>
        <taxon>Tetraodontidae</taxon>
        <taxon>Takifugu</taxon>
    </lineage>
</organism>
<accession>Q802R9</accession>
<feature type="chain" id="PRO_0000270954" description="Structural maintenance of chromosomes protein 5">
    <location>
        <begin position="1"/>
        <end position="1092"/>
    </location>
</feature>
<feature type="region of interest" description="Disordered" evidence="3">
    <location>
        <begin position="1"/>
        <end position="27"/>
    </location>
</feature>
<feature type="region of interest" description="Flexible hinge">
    <location>
        <begin position="450"/>
        <end position="635"/>
    </location>
</feature>
<feature type="coiled-coil region" evidence="2">
    <location>
        <begin position="146"/>
        <end position="449"/>
    </location>
</feature>
<feature type="coiled-coil region" evidence="2">
    <location>
        <begin position="636"/>
        <end position="806"/>
    </location>
</feature>
<feature type="coiled-coil region" evidence="2">
    <location>
        <begin position="878"/>
        <end position="921"/>
    </location>
</feature>
<feature type="compositionally biased region" description="Polar residues" evidence="3">
    <location>
        <begin position="12"/>
        <end position="22"/>
    </location>
</feature>
<feature type="binding site" evidence="2">
    <location>
        <begin position="71"/>
        <end position="78"/>
    </location>
    <ligand>
        <name>ATP</name>
        <dbReference type="ChEBI" id="CHEBI:30616"/>
    </ligand>
</feature>
<protein>
    <recommendedName>
        <fullName>Structural maintenance of chromosomes protein 5</fullName>
        <shortName>SMC protein 5</shortName>
        <shortName>SMC-5</shortName>
    </recommendedName>
</protein>
<evidence type="ECO:0000250" key="1"/>
<evidence type="ECO:0000255" key="2"/>
<evidence type="ECO:0000256" key="3">
    <source>
        <dbReference type="SAM" id="MobiDB-lite"/>
    </source>
</evidence>
<evidence type="ECO:0000305" key="4"/>
<name>SMC5_TAKRU</name>
<gene>
    <name type="primary">smc5</name>
    <name type="synonym">smc5l1</name>
</gene>
<comment type="function">
    <text evidence="1">Core component of the SMC5-SMC6 complex, a complex involved in repair of DNA double-strand breaks by homologous recombination. The complex may promote sister chromatid homologous recombination by recruiting the SMC1-SMC3 cohesin complex to double-strand breaks. The complex is required for telomere maintenance via recombination and mediates sumoylation of shelterin complex (telosome) components. Required for sister chromatid cohesion during prometaphase and mitotic progression; the function seems to be independent of SMC6 (By similarity).</text>
</comment>
<comment type="subunit">
    <text evidence="1">Forms a heterodimer with smc6. Component of the SMC5-SMC6 complex which consists at least of smc5, smc6, nsmce2, nsmce1 and nsmce4a (By similarity).</text>
</comment>
<comment type="subcellular location">
    <subcellularLocation>
        <location>Nucleus</location>
    </subcellularLocation>
    <subcellularLocation>
        <location evidence="1">Chromosome</location>
    </subcellularLocation>
    <subcellularLocation>
        <location evidence="1">Chromosome</location>
        <location evidence="1">Telomere</location>
    </subcellularLocation>
    <text evidence="1">Associates with chromatin.</text>
</comment>
<comment type="domain">
    <text evidence="1">The flexible hinge domain, which separates the large intramolecular coiled coil regions, allows the heterotypic interaction with the corresponding domain of SMC6, forming a V-shaped heterodimer.</text>
</comment>
<comment type="similarity">
    <text evidence="4">Belongs to the SMC family. SMC5 subfamily.</text>
</comment>
<dbReference type="EMBL" id="AJ543329">
    <property type="protein sequence ID" value="CAD65850.1"/>
    <property type="molecule type" value="mRNA"/>
</dbReference>
<dbReference type="RefSeq" id="NP_001027801.1">
    <property type="nucleotide sequence ID" value="NM_001032629.1"/>
</dbReference>
<dbReference type="SMR" id="Q802R9"/>
<dbReference type="FunCoup" id="Q802R9">
    <property type="interactions" value="1627"/>
</dbReference>
<dbReference type="STRING" id="31033.ENSTRUP00000041402"/>
<dbReference type="Ensembl" id="ENSTRUT00000041546.3">
    <property type="protein sequence ID" value="ENSTRUP00000041402.3"/>
    <property type="gene ID" value="ENSTRUG00000016193.3"/>
</dbReference>
<dbReference type="GeneID" id="445963"/>
<dbReference type="KEGG" id="tru:445963"/>
<dbReference type="CTD" id="23137"/>
<dbReference type="eggNOG" id="KOG0979">
    <property type="taxonomic scope" value="Eukaryota"/>
</dbReference>
<dbReference type="GeneTree" id="ENSGT00550000074816"/>
<dbReference type="InParanoid" id="Q802R9"/>
<dbReference type="OMA" id="RFWTSQP"/>
<dbReference type="OrthoDB" id="10254973at2759"/>
<dbReference type="Proteomes" id="UP000005226">
    <property type="component" value="Chromosome 3"/>
</dbReference>
<dbReference type="GO" id="GO:0000781">
    <property type="term" value="C:chromosome, telomeric region"/>
    <property type="evidence" value="ECO:0000250"/>
    <property type="project" value="UniProtKB"/>
</dbReference>
<dbReference type="GO" id="GO:0005634">
    <property type="term" value="C:nucleus"/>
    <property type="evidence" value="ECO:0000250"/>
    <property type="project" value="UniProtKB"/>
</dbReference>
<dbReference type="GO" id="GO:0016605">
    <property type="term" value="C:PML body"/>
    <property type="evidence" value="ECO:0000250"/>
    <property type="project" value="UniProtKB"/>
</dbReference>
<dbReference type="GO" id="GO:0030915">
    <property type="term" value="C:Smc5-Smc6 complex"/>
    <property type="evidence" value="ECO:0000250"/>
    <property type="project" value="UniProtKB"/>
</dbReference>
<dbReference type="GO" id="GO:0005524">
    <property type="term" value="F:ATP binding"/>
    <property type="evidence" value="ECO:0007669"/>
    <property type="project" value="UniProtKB-KW"/>
</dbReference>
<dbReference type="GO" id="GO:0003697">
    <property type="term" value="F:single-stranded DNA binding"/>
    <property type="evidence" value="ECO:0007669"/>
    <property type="project" value="TreeGrafter"/>
</dbReference>
<dbReference type="GO" id="GO:0051301">
    <property type="term" value="P:cell division"/>
    <property type="evidence" value="ECO:0007669"/>
    <property type="project" value="UniProtKB-KW"/>
</dbReference>
<dbReference type="GO" id="GO:0090398">
    <property type="term" value="P:cellular senescence"/>
    <property type="evidence" value="ECO:0000250"/>
    <property type="project" value="UniProtKB"/>
</dbReference>
<dbReference type="GO" id="GO:0000724">
    <property type="term" value="P:double-strand break repair via homologous recombination"/>
    <property type="evidence" value="ECO:0000250"/>
    <property type="project" value="UniProtKB"/>
</dbReference>
<dbReference type="GO" id="GO:0034184">
    <property type="term" value="P:positive regulation of maintenance of mitotic sister chromatid cohesion"/>
    <property type="evidence" value="ECO:0000250"/>
    <property type="project" value="UniProtKB"/>
</dbReference>
<dbReference type="GO" id="GO:0000722">
    <property type="term" value="P:telomere maintenance via recombination"/>
    <property type="evidence" value="ECO:0000250"/>
    <property type="project" value="UniProtKB"/>
</dbReference>
<dbReference type="FunFam" id="3.40.50.300:FF:001301">
    <property type="entry name" value="Structural maintenance of chromosomes 5"/>
    <property type="match status" value="1"/>
</dbReference>
<dbReference type="FunFam" id="3.40.50.300:FF:000793">
    <property type="entry name" value="Structural maintenance of chromosomes protein 5"/>
    <property type="match status" value="1"/>
</dbReference>
<dbReference type="Gene3D" id="1.10.287.1490">
    <property type="match status" value="1"/>
</dbReference>
<dbReference type="Gene3D" id="3.40.50.300">
    <property type="entry name" value="P-loop containing nucleotide triphosphate hydrolases"/>
    <property type="match status" value="2"/>
</dbReference>
<dbReference type="InterPro" id="IPR027417">
    <property type="entry name" value="P-loop_NTPase"/>
</dbReference>
<dbReference type="InterPro" id="IPR003395">
    <property type="entry name" value="RecF/RecN/SMC_N"/>
</dbReference>
<dbReference type="PANTHER" id="PTHR45916">
    <property type="entry name" value="STRUCTURAL MAINTENANCE OF CHROMOSOMES PROTEIN 5"/>
    <property type="match status" value="1"/>
</dbReference>
<dbReference type="PANTHER" id="PTHR45916:SF1">
    <property type="entry name" value="STRUCTURAL MAINTENANCE OF CHROMOSOMES PROTEIN 5"/>
    <property type="match status" value="1"/>
</dbReference>
<dbReference type="Pfam" id="PF02463">
    <property type="entry name" value="SMC_N"/>
    <property type="match status" value="1"/>
</dbReference>
<dbReference type="SUPFAM" id="SSF52540">
    <property type="entry name" value="P-loop containing nucleoside triphosphate hydrolases"/>
    <property type="match status" value="1"/>
</dbReference>